<proteinExistence type="inferred from homology"/>
<dbReference type="EMBL" id="AE000516">
    <property type="protein sequence ID" value="AAK44976.1"/>
    <property type="molecule type" value="Genomic_DNA"/>
</dbReference>
<dbReference type="PIR" id="H70643">
    <property type="entry name" value="H70643"/>
</dbReference>
<dbReference type="RefSeq" id="WP_003403667.1">
    <property type="nucleotide sequence ID" value="NZ_KK341227.1"/>
</dbReference>
<dbReference type="SMR" id="P9WH56"/>
<dbReference type="KEGG" id="mtc:MT0742.1"/>
<dbReference type="PATRIC" id="fig|83331.31.peg.795"/>
<dbReference type="HOGENOM" id="CLU_139869_3_0_11"/>
<dbReference type="Proteomes" id="UP000001020">
    <property type="component" value="Chromosome"/>
</dbReference>
<dbReference type="GO" id="GO:0005737">
    <property type="term" value="C:cytoplasm"/>
    <property type="evidence" value="ECO:0007669"/>
    <property type="project" value="UniProtKB-ARBA"/>
</dbReference>
<dbReference type="GO" id="GO:0015935">
    <property type="term" value="C:small ribosomal subunit"/>
    <property type="evidence" value="ECO:0007669"/>
    <property type="project" value="TreeGrafter"/>
</dbReference>
<dbReference type="GO" id="GO:0019843">
    <property type="term" value="F:rRNA binding"/>
    <property type="evidence" value="ECO:0007669"/>
    <property type="project" value="UniProtKB-UniRule"/>
</dbReference>
<dbReference type="GO" id="GO:0003735">
    <property type="term" value="F:structural constituent of ribosome"/>
    <property type="evidence" value="ECO:0007669"/>
    <property type="project" value="InterPro"/>
</dbReference>
<dbReference type="GO" id="GO:0008270">
    <property type="term" value="F:zinc ion binding"/>
    <property type="evidence" value="ECO:0007669"/>
    <property type="project" value="UniProtKB-UniRule"/>
</dbReference>
<dbReference type="GO" id="GO:0006412">
    <property type="term" value="P:translation"/>
    <property type="evidence" value="ECO:0007669"/>
    <property type="project" value="UniProtKB-UniRule"/>
</dbReference>
<dbReference type="FunFam" id="4.10.830.10:FF:000001">
    <property type="entry name" value="30S ribosomal protein S14 type Z"/>
    <property type="match status" value="1"/>
</dbReference>
<dbReference type="Gene3D" id="4.10.830.10">
    <property type="entry name" value="30s Ribosomal Protein S14, Chain N"/>
    <property type="match status" value="1"/>
</dbReference>
<dbReference type="HAMAP" id="MF_01364_B">
    <property type="entry name" value="Ribosomal_uS14_2_B"/>
    <property type="match status" value="1"/>
</dbReference>
<dbReference type="InterPro" id="IPR001209">
    <property type="entry name" value="Ribosomal_uS14"/>
</dbReference>
<dbReference type="InterPro" id="IPR023053">
    <property type="entry name" value="Ribosomal_uS14_bact"/>
</dbReference>
<dbReference type="InterPro" id="IPR018271">
    <property type="entry name" value="Ribosomal_uS14_CS"/>
</dbReference>
<dbReference type="InterPro" id="IPR043140">
    <property type="entry name" value="Ribosomal_uS14_sf"/>
</dbReference>
<dbReference type="NCBIfam" id="NF005974">
    <property type="entry name" value="PRK08061.1"/>
    <property type="match status" value="1"/>
</dbReference>
<dbReference type="PANTHER" id="PTHR19836">
    <property type="entry name" value="30S RIBOSOMAL PROTEIN S14"/>
    <property type="match status" value="1"/>
</dbReference>
<dbReference type="PANTHER" id="PTHR19836:SF19">
    <property type="entry name" value="SMALL RIBOSOMAL SUBUNIT PROTEIN US14M"/>
    <property type="match status" value="1"/>
</dbReference>
<dbReference type="Pfam" id="PF00253">
    <property type="entry name" value="Ribosomal_S14"/>
    <property type="match status" value="1"/>
</dbReference>
<dbReference type="SUPFAM" id="SSF57716">
    <property type="entry name" value="Glucocorticoid receptor-like (DNA-binding domain)"/>
    <property type="match status" value="1"/>
</dbReference>
<dbReference type="PROSITE" id="PS00527">
    <property type="entry name" value="RIBOSOMAL_S14"/>
    <property type="match status" value="1"/>
</dbReference>
<gene>
    <name evidence="1" type="primary">rpsZ</name>
    <name evidence="1" type="synonym">rpsN1</name>
    <name type="ordered locus">MT0742.1</name>
</gene>
<organism>
    <name type="scientific">Mycobacterium tuberculosis (strain CDC 1551 / Oshkosh)</name>
    <dbReference type="NCBI Taxonomy" id="83331"/>
    <lineage>
        <taxon>Bacteria</taxon>
        <taxon>Bacillati</taxon>
        <taxon>Actinomycetota</taxon>
        <taxon>Actinomycetes</taxon>
        <taxon>Mycobacteriales</taxon>
        <taxon>Mycobacteriaceae</taxon>
        <taxon>Mycobacterium</taxon>
        <taxon>Mycobacterium tuberculosis complex</taxon>
    </lineage>
</organism>
<name>RS14Z_MYCTO</name>
<protein>
    <recommendedName>
        <fullName evidence="1">Small ribosomal subunit protein uS14B</fullName>
    </recommendedName>
    <alternativeName>
        <fullName evidence="2">30S ribosomal protein S14 type Z</fullName>
    </alternativeName>
</protein>
<comment type="function">
    <text evidence="1">Binds 16S rRNA, required for the assembly of 30S particles and may also be responsible for determining the conformation of the 16S rRNA at the A site.</text>
</comment>
<comment type="cofactor">
    <cofactor evidence="1">
        <name>Zn(2+)</name>
        <dbReference type="ChEBI" id="CHEBI:29105"/>
    </cofactor>
    <text evidence="1">Binds 1 zinc ion per subunit.</text>
</comment>
<comment type="subunit">
    <text evidence="1">Part of the 30S ribosomal subunit. Contacts proteins S3 and S10.</text>
</comment>
<comment type="similarity">
    <text evidence="1">Belongs to the universal ribosomal protein uS14 family. Zinc-binding uS14 subfamily.</text>
</comment>
<accession>P9WH56</accession>
<accession>L0T4N2</accession>
<accession>P0A5X2</accession>
<accession>P95065</accession>
<sequence length="61" mass="6825">MAKKALVNKAAGKPRFAVRAYTRCSKCGRPRAVYRKFGLCRICLREMAHAGELPGVQKSSW</sequence>
<keyword id="KW-0479">Metal-binding</keyword>
<keyword id="KW-1185">Reference proteome</keyword>
<keyword id="KW-0687">Ribonucleoprotein</keyword>
<keyword id="KW-0689">Ribosomal protein</keyword>
<keyword id="KW-0694">RNA-binding</keyword>
<keyword id="KW-0699">rRNA-binding</keyword>
<keyword id="KW-0862">Zinc</keyword>
<evidence type="ECO:0000255" key="1">
    <source>
        <dbReference type="HAMAP-Rule" id="MF_01364"/>
    </source>
</evidence>
<evidence type="ECO:0000305" key="2"/>
<reference key="1">
    <citation type="journal article" date="2002" name="J. Bacteriol.">
        <title>Whole-genome comparison of Mycobacterium tuberculosis clinical and laboratory strains.</title>
        <authorList>
            <person name="Fleischmann R.D."/>
            <person name="Alland D."/>
            <person name="Eisen J.A."/>
            <person name="Carpenter L."/>
            <person name="White O."/>
            <person name="Peterson J.D."/>
            <person name="DeBoy R.T."/>
            <person name="Dodson R.J."/>
            <person name="Gwinn M.L."/>
            <person name="Haft D.H."/>
            <person name="Hickey E.K."/>
            <person name="Kolonay J.F."/>
            <person name="Nelson W.C."/>
            <person name="Umayam L.A."/>
            <person name="Ermolaeva M.D."/>
            <person name="Salzberg S.L."/>
            <person name="Delcher A."/>
            <person name="Utterback T.R."/>
            <person name="Weidman J.F."/>
            <person name="Khouri H.M."/>
            <person name="Gill J."/>
            <person name="Mikula A."/>
            <person name="Bishai W."/>
            <person name="Jacobs W.R. Jr."/>
            <person name="Venter J.C."/>
            <person name="Fraser C.M."/>
        </authorList>
    </citation>
    <scope>NUCLEOTIDE SEQUENCE [LARGE SCALE GENOMIC DNA]</scope>
    <source>
        <strain>CDC 1551 / Oshkosh</strain>
    </source>
</reference>
<feature type="chain" id="PRO_0000428245" description="Small ribosomal subunit protein uS14B">
    <location>
        <begin position="1"/>
        <end position="61"/>
    </location>
</feature>
<feature type="binding site" evidence="1">
    <location>
        <position position="24"/>
    </location>
    <ligand>
        <name>Zn(2+)</name>
        <dbReference type="ChEBI" id="CHEBI:29105"/>
    </ligand>
</feature>
<feature type="binding site" evidence="1">
    <location>
        <position position="27"/>
    </location>
    <ligand>
        <name>Zn(2+)</name>
        <dbReference type="ChEBI" id="CHEBI:29105"/>
    </ligand>
</feature>
<feature type="binding site" evidence="1">
    <location>
        <position position="40"/>
    </location>
    <ligand>
        <name>Zn(2+)</name>
        <dbReference type="ChEBI" id="CHEBI:29105"/>
    </ligand>
</feature>
<feature type="binding site" evidence="1">
    <location>
        <position position="43"/>
    </location>
    <ligand>
        <name>Zn(2+)</name>
        <dbReference type="ChEBI" id="CHEBI:29105"/>
    </ligand>
</feature>